<sequence length="772" mass="88217">MAEAHQAVAFQFTVTPDGVDFRLSREALRHIYLSGINSWKKRLIRIKNGILRGVYPGSPTSWLVVVMATVGSNYCKVDISMGLVHCIQRCLPTRYGSYGTPQTETLLSMVIFSTGVWATGIFLFRQTLKLLLSYHGWMFEMHSKTSHATKIWAICVRLLSSRRPMLYSFQTSLPKLPVPSVPATIHRYLDSVRPLLDDEAYFRMESLAKEFQDKIAPRLQKYLVLKSWWATNYVSDWWEEYVYLRGRSPIMVNSNYYAMDFVLIKNTSQQAARLGNTVHAMIMYRRKLDREEIKPVMALGMVPMCSYQMERMFNTTRIPGKETDLLQHLSESRHVAVYHKGRFFKVWLYEGSCLLKPRDLEMQFQRILDDTSPPQPGEEKLAALTAGGRVEWAEARQKFFSSGKNKMSLDTIERAAFFVALDEDSHCYNPDDEASLSLYGKSLLHGNCYNRWFDKSFTLISCKNGQLGLNTEHSWADAPIIGHLWEFVLATDTFHLGYTETGHCVGEPNTKLPPPQRMQWDIPEQCQTAIENSYQVAKALADDVELYCFQFLPFGKGLIKKCRTSPDAFVQIALQLAHFRDKGKFCLTYEASMTRMFREGRTETVRSCTSESTAFVRAMMTGSHKKQDLQDLFRKASEKHQNMYRLAMTGAGIDRHLFCLYIVSKYLGVRSPFLDEVLSEPWSLSTSQIPQFQICMFDPKQYPNHLGAGGGFGPVADHGYGVSYMIAGENTMFFHVSSKLSSSETNALRFGNHIRQALLDIADLFKISKTDS</sequence>
<reference key="1">
    <citation type="journal article" date="1995" name="FEBS Lett.">
        <title>High expression of a novel carnitine palmitoyltransferase I like protein in rat brown adipose tissue and heart: isolation and characterization of its cDNA clone.</title>
        <authorList>
            <person name="Yamazaki N."/>
            <person name="Shinohara Y."/>
            <person name="Shima A."/>
            <person name="Terada H."/>
        </authorList>
    </citation>
    <scope>NUCLEOTIDE SEQUENCE [MRNA]</scope>
    <scope>TISSUE SPECIFICITY</scope>
    <source>
        <strain>Wistar</strain>
        <tissue>Brown adipose tissue</tissue>
    </source>
</reference>
<reference key="2">
    <citation type="journal article" date="1996" name="J. Biol. Chem.">
        <title>Expression of a cDNA isolated from rat brown adipose tissue and heart identifies the product as the muscle isoform of carnitine palmitoyltransferase I (M-CPT I). M-CPT I is the predominant CPT I isoform expressed in both white (epididymal) and brown adipocytes.</title>
        <authorList>
            <person name="Esser V."/>
            <person name="Brown N.F."/>
            <person name="Cowan A.T."/>
            <person name="Foster D.W."/>
            <person name="McGarry J.D."/>
        </authorList>
    </citation>
    <scope>NUCLEOTIDE SEQUENCE [MRNA]</scope>
    <scope>CATALYTIC ACTIVITY</scope>
    <scope>TISSUE SPECIFICITY</scope>
    <scope>SUBCELLULAR LOCATION</scope>
    <scope>FUNCTION</scope>
    <source>
        <strain>Sprague-Dawley</strain>
        <tissue>Heart</tissue>
    </source>
</reference>
<reference key="3">
    <citation type="journal article" date="2004" name="Genome Res.">
        <title>The status, quality, and expansion of the NIH full-length cDNA project: the Mammalian Gene Collection (MGC).</title>
        <authorList>
            <consortium name="The MGC Project Team"/>
        </authorList>
    </citation>
    <scope>NUCLEOTIDE SEQUENCE [LARGE SCALE MRNA]</scope>
    <source>
        <tissue>Heart</tissue>
    </source>
</reference>
<reference key="4">
    <citation type="journal article" date="2014" name="Appl. Biochem. Biotechnol.">
        <title>Comparison of the catalytic activities of three isozymes of carnitine palmitoyltransferase 1 expressed in COS7 cells.</title>
        <authorList>
            <person name="Hada T."/>
            <person name="Yamamoto T."/>
            <person name="Yamamoto A."/>
            <person name="Ohkura K."/>
            <person name="Yamazaki N."/>
            <person name="Takiguchi Y."/>
            <person name="Shinohara Y."/>
        </authorList>
    </citation>
    <scope>FUNCTION</scope>
    <scope>CATALYTIC ACTIVITY</scope>
</reference>
<protein>
    <recommendedName>
        <fullName>Carnitine O-palmitoyltransferase 1, muscle isoform</fullName>
        <shortName>CPT1-M</shortName>
        <ecNumber evidence="5">2.3.1.21</ecNumber>
    </recommendedName>
    <alternativeName>
        <fullName>Carnitine O-palmitoyltransferase I, muscle isoform</fullName>
        <shortName>CPT I</shortName>
        <shortName>CPTI-M</shortName>
    </alternativeName>
    <alternativeName>
        <fullName>Carnitine palmitoyltransferase 1B</fullName>
    </alternativeName>
    <alternativeName>
        <fullName>Carnitine palmitoyltransferase I-like protein</fullName>
    </alternativeName>
</protein>
<organism>
    <name type="scientific">Rattus norvegicus</name>
    <name type="common">Rat</name>
    <dbReference type="NCBI Taxonomy" id="10116"/>
    <lineage>
        <taxon>Eukaryota</taxon>
        <taxon>Metazoa</taxon>
        <taxon>Chordata</taxon>
        <taxon>Craniata</taxon>
        <taxon>Vertebrata</taxon>
        <taxon>Euteleostomi</taxon>
        <taxon>Mammalia</taxon>
        <taxon>Eutheria</taxon>
        <taxon>Euarchontoglires</taxon>
        <taxon>Glires</taxon>
        <taxon>Rodentia</taxon>
        <taxon>Myomorpha</taxon>
        <taxon>Muroidea</taxon>
        <taxon>Muridae</taxon>
        <taxon>Murinae</taxon>
        <taxon>Rattus</taxon>
    </lineage>
</organism>
<name>CPT1B_RAT</name>
<gene>
    <name type="primary">Cpt1b</name>
</gene>
<dbReference type="EC" id="2.3.1.21" evidence="5"/>
<dbReference type="EMBL" id="D43623">
    <property type="protein sequence ID" value="BAA07733.1"/>
    <property type="molecule type" value="mRNA"/>
</dbReference>
<dbReference type="EMBL" id="BC085761">
    <property type="protein sequence ID" value="AAH85761.1"/>
    <property type="molecule type" value="mRNA"/>
</dbReference>
<dbReference type="PIR" id="S65532">
    <property type="entry name" value="S65532"/>
</dbReference>
<dbReference type="RefSeq" id="NP_037332.2">
    <property type="nucleotide sequence ID" value="NM_013200.2"/>
</dbReference>
<dbReference type="RefSeq" id="XP_063119136.1">
    <property type="nucleotide sequence ID" value="XM_063263066.1"/>
</dbReference>
<dbReference type="SMR" id="Q63704"/>
<dbReference type="FunCoup" id="Q63704">
    <property type="interactions" value="221"/>
</dbReference>
<dbReference type="STRING" id="10116.ENSRNOP00000013985"/>
<dbReference type="BindingDB" id="Q63704"/>
<dbReference type="ChEMBL" id="CHEMBL3216"/>
<dbReference type="DrugCentral" id="Q63704"/>
<dbReference type="GlyGen" id="Q63704">
    <property type="glycosylation" value="3 sites, 1 O-linked glycan (3 sites)"/>
</dbReference>
<dbReference type="iPTMnet" id="Q63704"/>
<dbReference type="PhosphoSitePlus" id="Q63704"/>
<dbReference type="PaxDb" id="10116-ENSRNOP00000013985"/>
<dbReference type="Ensembl" id="ENSRNOT00000013985.4">
    <property type="protein sequence ID" value="ENSRNOP00000013985.2"/>
    <property type="gene ID" value="ENSRNOG00000010438.8"/>
</dbReference>
<dbReference type="GeneID" id="25756"/>
<dbReference type="KEGG" id="rno:25756"/>
<dbReference type="AGR" id="RGD:2397"/>
<dbReference type="CTD" id="1375"/>
<dbReference type="RGD" id="2397">
    <property type="gene designation" value="Cpt1b"/>
</dbReference>
<dbReference type="eggNOG" id="KOG3716">
    <property type="taxonomic scope" value="Eukaryota"/>
</dbReference>
<dbReference type="GeneTree" id="ENSGT01130000278324"/>
<dbReference type="HOGENOM" id="CLU_013513_2_1_1"/>
<dbReference type="InParanoid" id="Q63704"/>
<dbReference type="OMA" id="PERCGPY"/>
<dbReference type="PhylomeDB" id="Q63704"/>
<dbReference type="TreeFam" id="TF313836"/>
<dbReference type="BRENDA" id="2.3.1.21">
    <property type="organism ID" value="5301"/>
</dbReference>
<dbReference type="Reactome" id="R-RNO-200425">
    <property type="pathway name" value="Carnitine shuttle"/>
</dbReference>
<dbReference type="SABIO-RK" id="Q63704"/>
<dbReference type="UniPathway" id="UPA00659"/>
<dbReference type="PRO" id="PR:Q63704"/>
<dbReference type="Proteomes" id="UP000002494">
    <property type="component" value="Chromosome 7"/>
</dbReference>
<dbReference type="Bgee" id="ENSRNOG00000010438">
    <property type="expression patterns" value="Expressed in heart and 19 other cell types or tissues"/>
</dbReference>
<dbReference type="GO" id="GO:0005758">
    <property type="term" value="C:mitochondrial intermembrane space"/>
    <property type="evidence" value="ECO:0007669"/>
    <property type="project" value="Ensembl"/>
</dbReference>
<dbReference type="GO" id="GO:0005741">
    <property type="term" value="C:mitochondrial outer membrane"/>
    <property type="evidence" value="ECO:0007669"/>
    <property type="project" value="UniProtKB-SubCell"/>
</dbReference>
<dbReference type="GO" id="GO:0005739">
    <property type="term" value="C:mitochondrion"/>
    <property type="evidence" value="ECO:0000314"/>
    <property type="project" value="UniProtKB"/>
</dbReference>
<dbReference type="GO" id="GO:0004095">
    <property type="term" value="F:carnitine O-palmitoyltransferase activity"/>
    <property type="evidence" value="ECO:0000314"/>
    <property type="project" value="UniProtKB"/>
</dbReference>
<dbReference type="GO" id="GO:0009437">
    <property type="term" value="P:carnitine metabolic process"/>
    <property type="evidence" value="ECO:0000314"/>
    <property type="project" value="UniProtKB"/>
</dbReference>
<dbReference type="GO" id="GO:0006853">
    <property type="term" value="P:carnitine shuttle"/>
    <property type="evidence" value="ECO:0007669"/>
    <property type="project" value="Ensembl"/>
</dbReference>
<dbReference type="GO" id="GO:0006635">
    <property type="term" value="P:fatty acid beta-oxidation"/>
    <property type="evidence" value="ECO:0007669"/>
    <property type="project" value="UniProtKB-UniPathway"/>
</dbReference>
<dbReference type="GO" id="GO:0006631">
    <property type="term" value="P:fatty acid metabolic process"/>
    <property type="evidence" value="ECO:0000314"/>
    <property type="project" value="UniProtKB"/>
</dbReference>
<dbReference type="GO" id="GO:0015909">
    <property type="term" value="P:long-chain fatty acid transport"/>
    <property type="evidence" value="ECO:0000314"/>
    <property type="project" value="RGD"/>
</dbReference>
<dbReference type="GO" id="GO:0009637">
    <property type="term" value="P:response to blue light"/>
    <property type="evidence" value="ECO:0000250"/>
    <property type="project" value="UniProtKB"/>
</dbReference>
<dbReference type="FunFam" id="3.30.559.70:FF:000001">
    <property type="entry name" value="Carnitine O-palmitoyltransferase 1, liver isoform"/>
    <property type="match status" value="1"/>
</dbReference>
<dbReference type="FunFam" id="3.30.559.10:FF:000002">
    <property type="entry name" value="carnitine O-palmitoyltransferase 1, liver isoform"/>
    <property type="match status" value="1"/>
</dbReference>
<dbReference type="Gene3D" id="6.10.250.1760">
    <property type="match status" value="1"/>
</dbReference>
<dbReference type="Gene3D" id="3.30.559.10">
    <property type="entry name" value="Chloramphenicol acetyltransferase-like domain"/>
    <property type="match status" value="1"/>
</dbReference>
<dbReference type="Gene3D" id="3.30.559.70">
    <property type="entry name" value="Choline/Carnitine o-acyltransferase, domain 2"/>
    <property type="match status" value="1"/>
</dbReference>
<dbReference type="InterPro" id="IPR000542">
    <property type="entry name" value="Carn_acyl_trans"/>
</dbReference>
<dbReference type="InterPro" id="IPR023213">
    <property type="entry name" value="CAT-like_dom_sf"/>
</dbReference>
<dbReference type="InterPro" id="IPR039551">
    <property type="entry name" value="Cho/carn_acyl_trans"/>
</dbReference>
<dbReference type="InterPro" id="IPR042231">
    <property type="entry name" value="Cho/carn_acyl_trans_2"/>
</dbReference>
<dbReference type="InterPro" id="IPR032476">
    <property type="entry name" value="CPT_N"/>
</dbReference>
<dbReference type="PANTHER" id="PTHR22589">
    <property type="entry name" value="CARNITINE O-ACYLTRANSFERASE"/>
    <property type="match status" value="1"/>
</dbReference>
<dbReference type="PANTHER" id="PTHR22589:SF69">
    <property type="entry name" value="CARNITINE O-PALMITOYLTRANSFERASE 1, MUSCLE ISOFORM"/>
    <property type="match status" value="1"/>
</dbReference>
<dbReference type="Pfam" id="PF00755">
    <property type="entry name" value="Carn_acyltransf"/>
    <property type="match status" value="1"/>
</dbReference>
<dbReference type="Pfam" id="PF16484">
    <property type="entry name" value="CPT_N"/>
    <property type="match status" value="1"/>
</dbReference>
<dbReference type="SUPFAM" id="SSF52777">
    <property type="entry name" value="CoA-dependent acyltransferases"/>
    <property type="match status" value="2"/>
</dbReference>
<dbReference type="PROSITE" id="PS00439">
    <property type="entry name" value="ACYLTRANSF_C_1"/>
    <property type="match status" value="1"/>
</dbReference>
<dbReference type="PROSITE" id="PS00440">
    <property type="entry name" value="ACYLTRANSF_C_2"/>
    <property type="match status" value="1"/>
</dbReference>
<proteinExistence type="evidence at protein level"/>
<comment type="function">
    <text evidence="3 5">Catalyzes the transfer of the acyl group of long-chain fatty acid-CoA conjugates onto carnitine, an essential step for the mitochondrial uptake of long-chain fatty acids and their subsequent beta-oxidation in the mitochondrion.</text>
</comment>
<comment type="catalytic activity">
    <reaction evidence="3 5">
        <text>(R)-carnitine + hexadecanoyl-CoA = O-hexadecanoyl-(R)-carnitine + CoA</text>
        <dbReference type="Rhea" id="RHEA:12661"/>
        <dbReference type="ChEBI" id="CHEBI:16347"/>
        <dbReference type="ChEBI" id="CHEBI:17490"/>
        <dbReference type="ChEBI" id="CHEBI:57287"/>
        <dbReference type="ChEBI" id="CHEBI:57379"/>
        <dbReference type="EC" id="2.3.1.21"/>
    </reaction>
    <physiologicalReaction direction="left-to-right" evidence="7">
        <dbReference type="Rhea" id="RHEA:12662"/>
    </physiologicalReaction>
</comment>
<comment type="pathway">
    <text>Lipid metabolism; fatty acid beta-oxidation.</text>
</comment>
<comment type="subcellular location">
    <subcellularLocation>
        <location evidence="8">Mitochondrion outer membrane</location>
        <topology evidence="2">Multi-pass membrane protein</topology>
    </subcellularLocation>
</comment>
<comment type="tissue specificity">
    <text evidence="4 5">High expression in heart, skeletal muscle and brown adipose tissue. Also expressed in white adipose tissue, but not in liver.</text>
</comment>
<comment type="similarity">
    <text evidence="6">Belongs to the carnitine/choline acetyltransferase family.</text>
</comment>
<feature type="chain" id="PRO_0000210165" description="Carnitine O-palmitoyltransferase 1, muscle isoform">
    <location>
        <begin position="1"/>
        <end position="772"/>
    </location>
</feature>
<feature type="topological domain" description="Cytoplasmic" evidence="2">
    <location>
        <begin position="1"/>
        <end position="47"/>
    </location>
</feature>
<feature type="transmembrane region" description="Helical" evidence="2">
    <location>
        <begin position="48"/>
        <end position="73"/>
    </location>
</feature>
<feature type="topological domain" description="Mitochondrial intermembrane" evidence="2">
    <location>
        <begin position="74"/>
        <end position="102"/>
    </location>
</feature>
<feature type="transmembrane region" description="Helical" evidence="2">
    <location>
        <begin position="103"/>
        <end position="122"/>
    </location>
</feature>
<feature type="topological domain" description="Cytoplasmic" evidence="2">
    <location>
        <begin position="123"/>
        <end position="772"/>
    </location>
</feature>
<feature type="active site" description="Proton acceptor" evidence="1">
    <location>
        <position position="473"/>
    </location>
</feature>
<feature type="binding site" evidence="1">
    <location>
        <begin position="555"/>
        <end position="567"/>
    </location>
    <ligand>
        <name>CoA</name>
        <dbReference type="ChEBI" id="CHEBI:57287"/>
    </ligand>
</feature>
<feature type="binding site" evidence="1">
    <location>
        <position position="589"/>
    </location>
    <ligand>
        <name>(R)-carnitine</name>
        <dbReference type="ChEBI" id="CHEBI:16347"/>
    </ligand>
</feature>
<feature type="binding site" evidence="1">
    <location>
        <position position="602"/>
    </location>
    <ligand>
        <name>(R)-carnitine</name>
        <dbReference type="ChEBI" id="CHEBI:16347"/>
    </ligand>
</feature>
<accession>Q63704</accession>
<keyword id="KW-0012">Acyltransferase</keyword>
<keyword id="KW-0276">Fatty acid metabolism</keyword>
<keyword id="KW-0443">Lipid metabolism</keyword>
<keyword id="KW-0472">Membrane</keyword>
<keyword id="KW-0496">Mitochondrion</keyword>
<keyword id="KW-1000">Mitochondrion outer membrane</keyword>
<keyword id="KW-1185">Reference proteome</keyword>
<keyword id="KW-0808">Transferase</keyword>
<keyword id="KW-0812">Transmembrane</keyword>
<keyword id="KW-1133">Transmembrane helix</keyword>
<keyword id="KW-0813">Transport</keyword>
<evidence type="ECO:0000250" key="1">
    <source>
        <dbReference type="UniProtKB" id="P18886"/>
    </source>
</evidence>
<evidence type="ECO:0000255" key="2"/>
<evidence type="ECO:0000269" key="3">
    <source>
    </source>
</evidence>
<evidence type="ECO:0000269" key="4">
    <source>
    </source>
</evidence>
<evidence type="ECO:0000269" key="5">
    <source>
    </source>
</evidence>
<evidence type="ECO:0000305" key="6"/>
<evidence type="ECO:0000305" key="7">
    <source>
    </source>
</evidence>
<evidence type="ECO:0000305" key="8">
    <source>
    </source>
</evidence>